<keyword id="KW-1185">Reference proteome</keyword>
<keyword id="KW-0687">Ribonucleoprotein</keyword>
<keyword id="KW-0689">Ribosomal protein</keyword>
<keyword id="KW-0694">RNA-binding</keyword>
<keyword id="KW-0699">rRNA-binding</keyword>
<dbReference type="EMBL" id="CP000896">
    <property type="protein sequence ID" value="ABX80727.1"/>
    <property type="molecule type" value="Genomic_DNA"/>
</dbReference>
<dbReference type="RefSeq" id="WP_012242058.1">
    <property type="nucleotide sequence ID" value="NC_010163.1"/>
</dbReference>
<dbReference type="SMR" id="A9NEE7"/>
<dbReference type="STRING" id="441768.ACL_0101"/>
<dbReference type="GeneID" id="41338303"/>
<dbReference type="KEGG" id="acl:ACL_0101"/>
<dbReference type="eggNOG" id="COG0096">
    <property type="taxonomic scope" value="Bacteria"/>
</dbReference>
<dbReference type="HOGENOM" id="CLU_098428_0_2_14"/>
<dbReference type="OrthoDB" id="9802617at2"/>
<dbReference type="Proteomes" id="UP000008558">
    <property type="component" value="Chromosome"/>
</dbReference>
<dbReference type="GO" id="GO:1990904">
    <property type="term" value="C:ribonucleoprotein complex"/>
    <property type="evidence" value="ECO:0007669"/>
    <property type="project" value="UniProtKB-KW"/>
</dbReference>
<dbReference type="GO" id="GO:0005840">
    <property type="term" value="C:ribosome"/>
    <property type="evidence" value="ECO:0007669"/>
    <property type="project" value="UniProtKB-KW"/>
</dbReference>
<dbReference type="GO" id="GO:0019843">
    <property type="term" value="F:rRNA binding"/>
    <property type="evidence" value="ECO:0007669"/>
    <property type="project" value="UniProtKB-UniRule"/>
</dbReference>
<dbReference type="GO" id="GO:0003735">
    <property type="term" value="F:structural constituent of ribosome"/>
    <property type="evidence" value="ECO:0007669"/>
    <property type="project" value="InterPro"/>
</dbReference>
<dbReference type="GO" id="GO:0006412">
    <property type="term" value="P:translation"/>
    <property type="evidence" value="ECO:0007669"/>
    <property type="project" value="UniProtKB-UniRule"/>
</dbReference>
<dbReference type="FunFam" id="3.30.1370.30:FF:000002">
    <property type="entry name" value="30S ribosomal protein S8"/>
    <property type="match status" value="1"/>
</dbReference>
<dbReference type="FunFam" id="3.30.1490.10:FF:000001">
    <property type="entry name" value="30S ribosomal protein S8"/>
    <property type="match status" value="1"/>
</dbReference>
<dbReference type="Gene3D" id="3.30.1370.30">
    <property type="match status" value="1"/>
</dbReference>
<dbReference type="Gene3D" id="3.30.1490.10">
    <property type="match status" value="1"/>
</dbReference>
<dbReference type="HAMAP" id="MF_01302_B">
    <property type="entry name" value="Ribosomal_uS8_B"/>
    <property type="match status" value="1"/>
</dbReference>
<dbReference type="InterPro" id="IPR000630">
    <property type="entry name" value="Ribosomal_uS8"/>
</dbReference>
<dbReference type="InterPro" id="IPR047863">
    <property type="entry name" value="Ribosomal_uS8_CS"/>
</dbReference>
<dbReference type="InterPro" id="IPR035987">
    <property type="entry name" value="Ribosomal_uS8_sf"/>
</dbReference>
<dbReference type="NCBIfam" id="NF001109">
    <property type="entry name" value="PRK00136.1"/>
    <property type="match status" value="1"/>
</dbReference>
<dbReference type="PANTHER" id="PTHR11758">
    <property type="entry name" value="40S RIBOSOMAL PROTEIN S15A"/>
    <property type="match status" value="1"/>
</dbReference>
<dbReference type="Pfam" id="PF00410">
    <property type="entry name" value="Ribosomal_S8"/>
    <property type="match status" value="1"/>
</dbReference>
<dbReference type="SUPFAM" id="SSF56047">
    <property type="entry name" value="Ribosomal protein S8"/>
    <property type="match status" value="1"/>
</dbReference>
<dbReference type="PROSITE" id="PS00053">
    <property type="entry name" value="RIBOSOMAL_S8"/>
    <property type="match status" value="1"/>
</dbReference>
<evidence type="ECO:0000255" key="1">
    <source>
        <dbReference type="HAMAP-Rule" id="MF_01302"/>
    </source>
</evidence>
<evidence type="ECO:0000305" key="2"/>
<gene>
    <name evidence="1" type="primary">rpsH</name>
    <name type="ordered locus">ACL_0101</name>
</gene>
<protein>
    <recommendedName>
        <fullName evidence="1">Small ribosomal subunit protein uS8</fullName>
    </recommendedName>
    <alternativeName>
        <fullName evidence="2">30S ribosomal protein S8</fullName>
    </alternativeName>
</protein>
<feature type="chain" id="PRO_1000085908" description="Small ribosomal subunit protein uS8">
    <location>
        <begin position="1"/>
        <end position="131"/>
    </location>
</feature>
<reference key="1">
    <citation type="journal article" date="2011" name="J. Bacteriol.">
        <title>Complete genome and proteome of Acholeplasma laidlawii.</title>
        <authorList>
            <person name="Lazarev V.N."/>
            <person name="Levitskii S.A."/>
            <person name="Basovskii Y.I."/>
            <person name="Chukin M.M."/>
            <person name="Akopian T.A."/>
            <person name="Vereshchagin V.V."/>
            <person name="Kostrjukova E.S."/>
            <person name="Kovaleva G.Y."/>
            <person name="Kazanov M.D."/>
            <person name="Malko D.B."/>
            <person name="Vitreschak A.G."/>
            <person name="Sernova N.V."/>
            <person name="Gelfand M.S."/>
            <person name="Demina I.A."/>
            <person name="Serebryakova M.V."/>
            <person name="Galyamina M.A."/>
            <person name="Vtyurin N.N."/>
            <person name="Rogov S.I."/>
            <person name="Alexeev D.G."/>
            <person name="Ladygina V.G."/>
            <person name="Govorun V.M."/>
        </authorList>
    </citation>
    <scope>NUCLEOTIDE SEQUENCE [LARGE SCALE GENOMIC DNA]</scope>
    <source>
        <strain>PG-8A</strain>
    </source>
</reference>
<proteinExistence type="inferred from homology"/>
<comment type="function">
    <text evidence="1">One of the primary rRNA binding proteins, it binds directly to 16S rRNA central domain where it helps coordinate assembly of the platform of the 30S subunit.</text>
</comment>
<comment type="subunit">
    <text evidence="1">Part of the 30S ribosomal subunit. Contacts proteins S5 and S12.</text>
</comment>
<comment type="similarity">
    <text evidence="1">Belongs to the universal ribosomal protein uS8 family.</text>
</comment>
<sequence>MVMTDPIADLLTRIRNANKARHPKVDMPSSKLKLEILKVMKQEGFIKDFSVNKDKFPKITVTLKYSDTNERVIKGLKRISKPGLRVYASIDNLPRVLNGLGVALVSTSKGILTDREARQQQIGGEVLAYVW</sequence>
<organism>
    <name type="scientific">Acholeplasma laidlawii (strain PG-8A)</name>
    <dbReference type="NCBI Taxonomy" id="441768"/>
    <lineage>
        <taxon>Bacteria</taxon>
        <taxon>Bacillati</taxon>
        <taxon>Mycoplasmatota</taxon>
        <taxon>Mollicutes</taxon>
        <taxon>Acholeplasmatales</taxon>
        <taxon>Acholeplasmataceae</taxon>
        <taxon>Acholeplasma</taxon>
    </lineage>
</organism>
<accession>A9NEE7</accession>
<name>RS8_ACHLI</name>